<keyword id="KW-0030">Aminoacyl-tRNA synthetase</keyword>
<keyword id="KW-0067">ATP-binding</keyword>
<keyword id="KW-0963">Cytoplasm</keyword>
<keyword id="KW-0436">Ligase</keyword>
<keyword id="KW-0479">Metal-binding</keyword>
<keyword id="KW-0547">Nucleotide-binding</keyword>
<keyword id="KW-0648">Protein biosynthesis</keyword>
<keyword id="KW-0694">RNA-binding</keyword>
<keyword id="KW-0820">tRNA-binding</keyword>
<keyword id="KW-0862">Zinc</keyword>
<proteinExistence type="inferred from homology"/>
<feature type="chain" id="PRO_1000098620" description="Threonine--tRNA ligase">
    <location>
        <begin position="1"/>
        <end position="647"/>
    </location>
</feature>
<feature type="domain" description="TGS" evidence="2">
    <location>
        <begin position="1"/>
        <end position="61"/>
    </location>
</feature>
<feature type="region of interest" description="Catalytic" evidence="1">
    <location>
        <begin position="240"/>
        <end position="538"/>
    </location>
</feature>
<feature type="binding site" evidence="1">
    <location>
        <position position="334"/>
    </location>
    <ligand>
        <name>Zn(2+)</name>
        <dbReference type="ChEBI" id="CHEBI:29105"/>
    </ligand>
</feature>
<feature type="binding site" evidence="1">
    <location>
        <position position="385"/>
    </location>
    <ligand>
        <name>Zn(2+)</name>
        <dbReference type="ChEBI" id="CHEBI:29105"/>
    </ligand>
</feature>
<feature type="binding site" evidence="1">
    <location>
        <position position="515"/>
    </location>
    <ligand>
        <name>Zn(2+)</name>
        <dbReference type="ChEBI" id="CHEBI:29105"/>
    </ligand>
</feature>
<protein>
    <recommendedName>
        <fullName evidence="1">Threonine--tRNA ligase</fullName>
        <ecNumber evidence="1">6.1.1.3</ecNumber>
    </recommendedName>
    <alternativeName>
        <fullName evidence="1">Threonyl-tRNA synthetase</fullName>
        <shortName evidence="1">ThrRS</shortName>
    </alternativeName>
</protein>
<sequence>MIKITFPDGAVREFESGVTTFDIAESISKSLAKKALAGKFNDQLIDTTRAIEEDGSIEIVTPDHKDAYEVLRHSAAHLFAQAAKRLFPNLHLGVGPAIAEGFYYDTDNAEGQISNEDLPRIEAEMQKIVTENYPCIREEVTKEEALELFKDDPYKVELINEHAGAGLTVYRQGEFVDLCRGPHVPSTGRIQVFHLLNVAGAYWRGNSDNNMMQRIYGTAWFDKKDLKAYLTRLEEAKERDHRKLGKELDLFMISQEVGQGLPFWLPDGATIRRTLERYITDKELASGYQHVYTPPLASVELYKTSGHWDHYQEDMFPVMDMGDGEEFVLRPMNCPHHIQVYKNHVRSYRELPIRIAELGMMHRYEKSGALSGLQRVREMTLNDGHIFVTPEQIQEEFQRALQLIIDVYADFNLTDYRFRLSYRDPNDTHKYYDNDEMWENAQSMLKAALDEMGVDYFEAEGEAAFYGPKLDIQVKTALGNEETLSTIQLDFLLPERFDLKYIGADGEEHRPVMIHRGVISTMERFTAILIETYKGAFPTWLAPHQVTVIPISNEAHIDYAWEVAKILRDRGVRADVDDRNEKMQYKIRASQTSKIPYQLIVGDKEMEDKSVNVRRYGSKATHTESVEDFVENILADIARKSRPDAQA</sequence>
<reference key="1">
    <citation type="journal article" date="2008" name="J. Bacteriol.">
        <title>Genome sequence of a nephritogenic and highly transformable M49 strain of Streptococcus pyogenes.</title>
        <authorList>
            <person name="McShan W.M."/>
            <person name="Ferretti J.J."/>
            <person name="Karasawa T."/>
            <person name="Suvorov A.N."/>
            <person name="Lin S."/>
            <person name="Qin B."/>
            <person name="Jia H."/>
            <person name="Kenton S."/>
            <person name="Najar F."/>
            <person name="Wu H."/>
            <person name="Scott J."/>
            <person name="Roe B.A."/>
            <person name="Savic D.J."/>
        </authorList>
    </citation>
    <scope>NUCLEOTIDE SEQUENCE [LARGE SCALE GENOMIC DNA]</scope>
    <source>
        <strain>NZ131</strain>
    </source>
</reference>
<name>SYT_STRPZ</name>
<dbReference type="EC" id="6.1.1.3" evidence="1"/>
<dbReference type="EMBL" id="CP000829">
    <property type="protein sequence ID" value="ACI60768.1"/>
    <property type="molecule type" value="Genomic_DNA"/>
</dbReference>
<dbReference type="SMR" id="B5XKA6"/>
<dbReference type="KEGG" id="soz:Spy49_0435"/>
<dbReference type="HOGENOM" id="CLU_008554_3_2_9"/>
<dbReference type="Proteomes" id="UP000001039">
    <property type="component" value="Chromosome"/>
</dbReference>
<dbReference type="GO" id="GO:0005737">
    <property type="term" value="C:cytoplasm"/>
    <property type="evidence" value="ECO:0007669"/>
    <property type="project" value="UniProtKB-SubCell"/>
</dbReference>
<dbReference type="GO" id="GO:0005524">
    <property type="term" value="F:ATP binding"/>
    <property type="evidence" value="ECO:0007669"/>
    <property type="project" value="UniProtKB-UniRule"/>
</dbReference>
<dbReference type="GO" id="GO:0140096">
    <property type="term" value="F:catalytic activity, acting on a protein"/>
    <property type="evidence" value="ECO:0007669"/>
    <property type="project" value="UniProtKB-ARBA"/>
</dbReference>
<dbReference type="GO" id="GO:0046872">
    <property type="term" value="F:metal ion binding"/>
    <property type="evidence" value="ECO:0007669"/>
    <property type="project" value="UniProtKB-KW"/>
</dbReference>
<dbReference type="GO" id="GO:0004829">
    <property type="term" value="F:threonine-tRNA ligase activity"/>
    <property type="evidence" value="ECO:0007669"/>
    <property type="project" value="UniProtKB-UniRule"/>
</dbReference>
<dbReference type="GO" id="GO:0016740">
    <property type="term" value="F:transferase activity"/>
    <property type="evidence" value="ECO:0007669"/>
    <property type="project" value="UniProtKB-ARBA"/>
</dbReference>
<dbReference type="GO" id="GO:0000049">
    <property type="term" value="F:tRNA binding"/>
    <property type="evidence" value="ECO:0007669"/>
    <property type="project" value="UniProtKB-KW"/>
</dbReference>
<dbReference type="GO" id="GO:0006435">
    <property type="term" value="P:threonyl-tRNA aminoacylation"/>
    <property type="evidence" value="ECO:0007669"/>
    <property type="project" value="UniProtKB-UniRule"/>
</dbReference>
<dbReference type="CDD" id="cd01667">
    <property type="entry name" value="TGS_ThrRS"/>
    <property type="match status" value="1"/>
</dbReference>
<dbReference type="CDD" id="cd00860">
    <property type="entry name" value="ThrRS_anticodon"/>
    <property type="match status" value="1"/>
</dbReference>
<dbReference type="CDD" id="cd00771">
    <property type="entry name" value="ThrRS_core"/>
    <property type="match status" value="1"/>
</dbReference>
<dbReference type="FunFam" id="3.10.20.30:FF:000005">
    <property type="entry name" value="Threonine--tRNA ligase"/>
    <property type="match status" value="1"/>
</dbReference>
<dbReference type="FunFam" id="3.30.54.20:FF:000002">
    <property type="entry name" value="Threonine--tRNA ligase"/>
    <property type="match status" value="1"/>
</dbReference>
<dbReference type="FunFam" id="3.30.930.10:FF:000002">
    <property type="entry name" value="Threonine--tRNA ligase"/>
    <property type="match status" value="1"/>
</dbReference>
<dbReference type="FunFam" id="3.40.50.800:FF:000001">
    <property type="entry name" value="Threonine--tRNA ligase"/>
    <property type="match status" value="1"/>
</dbReference>
<dbReference type="FunFam" id="3.30.980.10:FF:000005">
    <property type="entry name" value="Threonyl-tRNA synthetase, mitochondrial"/>
    <property type="match status" value="1"/>
</dbReference>
<dbReference type="Gene3D" id="3.10.20.30">
    <property type="match status" value="1"/>
</dbReference>
<dbReference type="Gene3D" id="3.30.54.20">
    <property type="match status" value="1"/>
</dbReference>
<dbReference type="Gene3D" id="3.40.50.800">
    <property type="entry name" value="Anticodon-binding domain"/>
    <property type="match status" value="1"/>
</dbReference>
<dbReference type="Gene3D" id="3.30.930.10">
    <property type="entry name" value="Bira Bifunctional Protein, Domain 2"/>
    <property type="match status" value="1"/>
</dbReference>
<dbReference type="Gene3D" id="3.30.980.10">
    <property type="entry name" value="Threonyl-trna Synthetase, Chain A, domain 2"/>
    <property type="match status" value="1"/>
</dbReference>
<dbReference type="HAMAP" id="MF_00184">
    <property type="entry name" value="Thr_tRNA_synth"/>
    <property type="match status" value="1"/>
</dbReference>
<dbReference type="InterPro" id="IPR002314">
    <property type="entry name" value="aa-tRNA-synt_IIb"/>
</dbReference>
<dbReference type="InterPro" id="IPR006195">
    <property type="entry name" value="aa-tRNA-synth_II"/>
</dbReference>
<dbReference type="InterPro" id="IPR045864">
    <property type="entry name" value="aa-tRNA-synth_II/BPL/LPL"/>
</dbReference>
<dbReference type="InterPro" id="IPR004154">
    <property type="entry name" value="Anticodon-bd"/>
</dbReference>
<dbReference type="InterPro" id="IPR036621">
    <property type="entry name" value="Anticodon-bd_dom_sf"/>
</dbReference>
<dbReference type="InterPro" id="IPR012675">
    <property type="entry name" value="Beta-grasp_dom_sf"/>
</dbReference>
<dbReference type="InterPro" id="IPR004095">
    <property type="entry name" value="TGS"/>
</dbReference>
<dbReference type="InterPro" id="IPR012676">
    <property type="entry name" value="TGS-like"/>
</dbReference>
<dbReference type="InterPro" id="IPR002320">
    <property type="entry name" value="Thr-tRNA-ligase_IIa"/>
</dbReference>
<dbReference type="InterPro" id="IPR018163">
    <property type="entry name" value="Thr/Ala-tRNA-synth_IIc_edit"/>
</dbReference>
<dbReference type="InterPro" id="IPR047246">
    <property type="entry name" value="ThrRS_anticodon"/>
</dbReference>
<dbReference type="InterPro" id="IPR033728">
    <property type="entry name" value="ThrRS_core"/>
</dbReference>
<dbReference type="InterPro" id="IPR012947">
    <property type="entry name" value="tRNA_SAD"/>
</dbReference>
<dbReference type="NCBIfam" id="TIGR00418">
    <property type="entry name" value="thrS"/>
    <property type="match status" value="1"/>
</dbReference>
<dbReference type="PANTHER" id="PTHR11451:SF56">
    <property type="entry name" value="THREONINE--TRNA LIGASE 1"/>
    <property type="match status" value="1"/>
</dbReference>
<dbReference type="PANTHER" id="PTHR11451">
    <property type="entry name" value="THREONINE-TRNA LIGASE"/>
    <property type="match status" value="1"/>
</dbReference>
<dbReference type="Pfam" id="PF03129">
    <property type="entry name" value="HGTP_anticodon"/>
    <property type="match status" value="1"/>
</dbReference>
<dbReference type="Pfam" id="PF02824">
    <property type="entry name" value="TGS"/>
    <property type="match status" value="1"/>
</dbReference>
<dbReference type="Pfam" id="PF00587">
    <property type="entry name" value="tRNA-synt_2b"/>
    <property type="match status" value="1"/>
</dbReference>
<dbReference type="Pfam" id="PF07973">
    <property type="entry name" value="tRNA_SAD"/>
    <property type="match status" value="1"/>
</dbReference>
<dbReference type="PRINTS" id="PR01047">
    <property type="entry name" value="TRNASYNTHTHR"/>
</dbReference>
<dbReference type="SMART" id="SM00863">
    <property type="entry name" value="tRNA_SAD"/>
    <property type="match status" value="1"/>
</dbReference>
<dbReference type="SUPFAM" id="SSF52954">
    <property type="entry name" value="Class II aaRS ABD-related"/>
    <property type="match status" value="1"/>
</dbReference>
<dbReference type="SUPFAM" id="SSF55681">
    <property type="entry name" value="Class II aaRS and biotin synthetases"/>
    <property type="match status" value="1"/>
</dbReference>
<dbReference type="SUPFAM" id="SSF81271">
    <property type="entry name" value="TGS-like"/>
    <property type="match status" value="1"/>
</dbReference>
<dbReference type="SUPFAM" id="SSF55186">
    <property type="entry name" value="ThrRS/AlaRS common domain"/>
    <property type="match status" value="1"/>
</dbReference>
<dbReference type="PROSITE" id="PS50862">
    <property type="entry name" value="AA_TRNA_LIGASE_II"/>
    <property type="match status" value="1"/>
</dbReference>
<dbReference type="PROSITE" id="PS51880">
    <property type="entry name" value="TGS"/>
    <property type="match status" value="1"/>
</dbReference>
<organism>
    <name type="scientific">Streptococcus pyogenes serotype M49 (strain NZ131)</name>
    <dbReference type="NCBI Taxonomy" id="471876"/>
    <lineage>
        <taxon>Bacteria</taxon>
        <taxon>Bacillati</taxon>
        <taxon>Bacillota</taxon>
        <taxon>Bacilli</taxon>
        <taxon>Lactobacillales</taxon>
        <taxon>Streptococcaceae</taxon>
        <taxon>Streptococcus</taxon>
    </lineage>
</organism>
<evidence type="ECO:0000255" key="1">
    <source>
        <dbReference type="HAMAP-Rule" id="MF_00184"/>
    </source>
</evidence>
<evidence type="ECO:0000255" key="2">
    <source>
        <dbReference type="PROSITE-ProRule" id="PRU01228"/>
    </source>
</evidence>
<gene>
    <name evidence="1" type="primary">thrS</name>
    <name type="ordered locus">Spy49_0435</name>
</gene>
<accession>B5XKA6</accession>
<comment type="function">
    <text evidence="1">Catalyzes the attachment of threonine to tRNA(Thr) in a two-step reaction: L-threonine is first activated by ATP to form Thr-AMP and then transferred to the acceptor end of tRNA(Thr). Also edits incorrectly charged L-seryl-tRNA(Thr).</text>
</comment>
<comment type="catalytic activity">
    <reaction evidence="1">
        <text>tRNA(Thr) + L-threonine + ATP = L-threonyl-tRNA(Thr) + AMP + diphosphate + H(+)</text>
        <dbReference type="Rhea" id="RHEA:24624"/>
        <dbReference type="Rhea" id="RHEA-COMP:9670"/>
        <dbReference type="Rhea" id="RHEA-COMP:9704"/>
        <dbReference type="ChEBI" id="CHEBI:15378"/>
        <dbReference type="ChEBI" id="CHEBI:30616"/>
        <dbReference type="ChEBI" id="CHEBI:33019"/>
        <dbReference type="ChEBI" id="CHEBI:57926"/>
        <dbReference type="ChEBI" id="CHEBI:78442"/>
        <dbReference type="ChEBI" id="CHEBI:78534"/>
        <dbReference type="ChEBI" id="CHEBI:456215"/>
        <dbReference type="EC" id="6.1.1.3"/>
    </reaction>
</comment>
<comment type="cofactor">
    <cofactor evidence="1">
        <name>Zn(2+)</name>
        <dbReference type="ChEBI" id="CHEBI:29105"/>
    </cofactor>
    <text evidence="1">Binds 1 zinc ion per subunit.</text>
</comment>
<comment type="subunit">
    <text evidence="1">Homodimer.</text>
</comment>
<comment type="subcellular location">
    <subcellularLocation>
        <location evidence="1">Cytoplasm</location>
    </subcellularLocation>
</comment>
<comment type="similarity">
    <text evidence="1">Belongs to the class-II aminoacyl-tRNA synthetase family.</text>
</comment>